<name>RS11_SYNAS</name>
<reference key="1">
    <citation type="journal article" date="2007" name="Proc. Natl. Acad. Sci. U.S.A.">
        <title>The genome of Syntrophus aciditrophicus: life at the thermodynamic limit of microbial growth.</title>
        <authorList>
            <person name="McInerney M.J."/>
            <person name="Rohlin L."/>
            <person name="Mouttaki H."/>
            <person name="Kim U."/>
            <person name="Krupp R.S."/>
            <person name="Rios-Hernandez L."/>
            <person name="Sieber J."/>
            <person name="Struchtemeyer C.G."/>
            <person name="Bhattacharyya A."/>
            <person name="Campbell J.W."/>
            <person name="Gunsalus R.P."/>
        </authorList>
    </citation>
    <scope>NUCLEOTIDE SEQUENCE [LARGE SCALE GENOMIC DNA]</scope>
    <source>
        <strain>SB</strain>
    </source>
</reference>
<dbReference type="EMBL" id="CP000252">
    <property type="protein sequence ID" value="ABC76205.1"/>
    <property type="molecule type" value="Genomic_DNA"/>
</dbReference>
<dbReference type="RefSeq" id="WP_011416239.1">
    <property type="nucleotide sequence ID" value="NC_007759.1"/>
</dbReference>
<dbReference type="SMR" id="Q2LQD1"/>
<dbReference type="FunCoup" id="Q2LQD1">
    <property type="interactions" value="522"/>
</dbReference>
<dbReference type="STRING" id="56780.SYN_01599"/>
<dbReference type="KEGG" id="sat:SYN_01599"/>
<dbReference type="eggNOG" id="COG0100">
    <property type="taxonomic scope" value="Bacteria"/>
</dbReference>
<dbReference type="HOGENOM" id="CLU_072439_5_0_7"/>
<dbReference type="InParanoid" id="Q2LQD1"/>
<dbReference type="OrthoDB" id="9806415at2"/>
<dbReference type="Proteomes" id="UP000001933">
    <property type="component" value="Chromosome"/>
</dbReference>
<dbReference type="GO" id="GO:1990904">
    <property type="term" value="C:ribonucleoprotein complex"/>
    <property type="evidence" value="ECO:0007669"/>
    <property type="project" value="UniProtKB-KW"/>
</dbReference>
<dbReference type="GO" id="GO:0005840">
    <property type="term" value="C:ribosome"/>
    <property type="evidence" value="ECO:0007669"/>
    <property type="project" value="UniProtKB-KW"/>
</dbReference>
<dbReference type="GO" id="GO:0019843">
    <property type="term" value="F:rRNA binding"/>
    <property type="evidence" value="ECO:0007669"/>
    <property type="project" value="UniProtKB-UniRule"/>
</dbReference>
<dbReference type="GO" id="GO:0003735">
    <property type="term" value="F:structural constituent of ribosome"/>
    <property type="evidence" value="ECO:0007669"/>
    <property type="project" value="InterPro"/>
</dbReference>
<dbReference type="GO" id="GO:0006412">
    <property type="term" value="P:translation"/>
    <property type="evidence" value="ECO:0007669"/>
    <property type="project" value="UniProtKB-UniRule"/>
</dbReference>
<dbReference type="FunFam" id="3.30.420.80:FF:000001">
    <property type="entry name" value="30S ribosomal protein S11"/>
    <property type="match status" value="1"/>
</dbReference>
<dbReference type="Gene3D" id="3.30.420.80">
    <property type="entry name" value="Ribosomal protein S11"/>
    <property type="match status" value="1"/>
</dbReference>
<dbReference type="HAMAP" id="MF_01310">
    <property type="entry name" value="Ribosomal_uS11"/>
    <property type="match status" value="1"/>
</dbReference>
<dbReference type="InterPro" id="IPR001971">
    <property type="entry name" value="Ribosomal_uS11"/>
</dbReference>
<dbReference type="InterPro" id="IPR019981">
    <property type="entry name" value="Ribosomal_uS11_bac-type"/>
</dbReference>
<dbReference type="InterPro" id="IPR018102">
    <property type="entry name" value="Ribosomal_uS11_CS"/>
</dbReference>
<dbReference type="InterPro" id="IPR036967">
    <property type="entry name" value="Ribosomal_uS11_sf"/>
</dbReference>
<dbReference type="NCBIfam" id="NF003698">
    <property type="entry name" value="PRK05309.1"/>
    <property type="match status" value="1"/>
</dbReference>
<dbReference type="NCBIfam" id="TIGR03632">
    <property type="entry name" value="uS11_bact"/>
    <property type="match status" value="1"/>
</dbReference>
<dbReference type="PANTHER" id="PTHR11759">
    <property type="entry name" value="40S RIBOSOMAL PROTEIN S14/30S RIBOSOMAL PROTEIN S11"/>
    <property type="match status" value="1"/>
</dbReference>
<dbReference type="Pfam" id="PF00411">
    <property type="entry name" value="Ribosomal_S11"/>
    <property type="match status" value="1"/>
</dbReference>
<dbReference type="PIRSF" id="PIRSF002131">
    <property type="entry name" value="Ribosomal_S11"/>
    <property type="match status" value="1"/>
</dbReference>
<dbReference type="SUPFAM" id="SSF53137">
    <property type="entry name" value="Translational machinery components"/>
    <property type="match status" value="1"/>
</dbReference>
<dbReference type="PROSITE" id="PS00054">
    <property type="entry name" value="RIBOSOMAL_S11"/>
    <property type="match status" value="1"/>
</dbReference>
<evidence type="ECO:0000255" key="1">
    <source>
        <dbReference type="HAMAP-Rule" id="MF_01310"/>
    </source>
</evidence>
<evidence type="ECO:0000305" key="2"/>
<sequence length="130" mass="14162">MAKQVRKTGKKKEKKNIPEGIAHIQSTFNNTIITITDPIGNVIAWSSSGMQGFKGSRKSTPFAAQMAAEDCVKKAKEHGLRKVQVYVKGPGSGRESALRSLQAAGLTISLIRDVTPIPHNGCRPPKRRRV</sequence>
<accession>Q2LQD1</accession>
<protein>
    <recommendedName>
        <fullName evidence="1">Small ribosomal subunit protein uS11</fullName>
    </recommendedName>
    <alternativeName>
        <fullName evidence="2">30S ribosomal protein S11</fullName>
    </alternativeName>
</protein>
<keyword id="KW-1185">Reference proteome</keyword>
<keyword id="KW-0687">Ribonucleoprotein</keyword>
<keyword id="KW-0689">Ribosomal protein</keyword>
<keyword id="KW-0694">RNA-binding</keyword>
<keyword id="KW-0699">rRNA-binding</keyword>
<gene>
    <name evidence="1" type="primary">rpsK</name>
    <name type="ordered locus">SYNAS_03260</name>
    <name type="ORF">SYN_01599</name>
</gene>
<organism>
    <name type="scientific">Syntrophus aciditrophicus (strain SB)</name>
    <dbReference type="NCBI Taxonomy" id="56780"/>
    <lineage>
        <taxon>Bacteria</taxon>
        <taxon>Pseudomonadati</taxon>
        <taxon>Thermodesulfobacteriota</taxon>
        <taxon>Syntrophia</taxon>
        <taxon>Syntrophales</taxon>
        <taxon>Syntrophaceae</taxon>
        <taxon>Syntrophus</taxon>
    </lineage>
</organism>
<feature type="chain" id="PRO_0000294881" description="Small ribosomal subunit protein uS11">
    <location>
        <begin position="1"/>
        <end position="130"/>
    </location>
</feature>
<proteinExistence type="inferred from homology"/>
<comment type="function">
    <text evidence="1">Located on the platform of the 30S subunit, it bridges several disparate RNA helices of the 16S rRNA. Forms part of the Shine-Dalgarno cleft in the 70S ribosome.</text>
</comment>
<comment type="subunit">
    <text evidence="1">Part of the 30S ribosomal subunit. Interacts with proteins S7 and S18. Binds to IF-3.</text>
</comment>
<comment type="similarity">
    <text evidence="1">Belongs to the universal ribosomal protein uS11 family.</text>
</comment>